<organism>
    <name type="scientific">Clostridium kluyveri (strain NBRC 12016)</name>
    <dbReference type="NCBI Taxonomy" id="583346"/>
    <lineage>
        <taxon>Bacteria</taxon>
        <taxon>Bacillati</taxon>
        <taxon>Bacillota</taxon>
        <taxon>Clostridia</taxon>
        <taxon>Eubacteriales</taxon>
        <taxon>Clostridiaceae</taxon>
        <taxon>Clostridium</taxon>
    </lineage>
</organism>
<name>YBEY_CLOK1</name>
<dbReference type="EC" id="3.1.-.-" evidence="1"/>
<dbReference type="EMBL" id="AP009049">
    <property type="protein sequence ID" value="BAH05877.1"/>
    <property type="molecule type" value="Genomic_DNA"/>
</dbReference>
<dbReference type="RefSeq" id="WP_012101292.1">
    <property type="nucleotide sequence ID" value="NC_011837.1"/>
</dbReference>
<dbReference type="SMR" id="B9E052"/>
<dbReference type="KEGG" id="ckr:CKR_0826"/>
<dbReference type="HOGENOM" id="CLU_106710_3_0_9"/>
<dbReference type="Proteomes" id="UP000007969">
    <property type="component" value="Chromosome"/>
</dbReference>
<dbReference type="GO" id="GO:0005737">
    <property type="term" value="C:cytoplasm"/>
    <property type="evidence" value="ECO:0007669"/>
    <property type="project" value="UniProtKB-SubCell"/>
</dbReference>
<dbReference type="GO" id="GO:0004222">
    <property type="term" value="F:metalloendopeptidase activity"/>
    <property type="evidence" value="ECO:0007669"/>
    <property type="project" value="InterPro"/>
</dbReference>
<dbReference type="GO" id="GO:0004521">
    <property type="term" value="F:RNA endonuclease activity"/>
    <property type="evidence" value="ECO:0007669"/>
    <property type="project" value="UniProtKB-UniRule"/>
</dbReference>
<dbReference type="GO" id="GO:0008270">
    <property type="term" value="F:zinc ion binding"/>
    <property type="evidence" value="ECO:0007669"/>
    <property type="project" value="UniProtKB-UniRule"/>
</dbReference>
<dbReference type="GO" id="GO:0006364">
    <property type="term" value="P:rRNA processing"/>
    <property type="evidence" value="ECO:0007669"/>
    <property type="project" value="UniProtKB-UniRule"/>
</dbReference>
<dbReference type="Gene3D" id="3.40.390.30">
    <property type="entry name" value="Metalloproteases ('zincins'), catalytic domain"/>
    <property type="match status" value="1"/>
</dbReference>
<dbReference type="HAMAP" id="MF_00009">
    <property type="entry name" value="Endoribonucl_YbeY"/>
    <property type="match status" value="1"/>
</dbReference>
<dbReference type="InterPro" id="IPR023091">
    <property type="entry name" value="MetalPrtase_cat_dom_sf_prd"/>
</dbReference>
<dbReference type="InterPro" id="IPR002036">
    <property type="entry name" value="YbeY"/>
</dbReference>
<dbReference type="InterPro" id="IPR020549">
    <property type="entry name" value="YbeY_CS"/>
</dbReference>
<dbReference type="NCBIfam" id="TIGR00043">
    <property type="entry name" value="rRNA maturation RNase YbeY"/>
    <property type="match status" value="1"/>
</dbReference>
<dbReference type="PANTHER" id="PTHR46986">
    <property type="entry name" value="ENDORIBONUCLEASE YBEY, CHLOROPLASTIC"/>
    <property type="match status" value="1"/>
</dbReference>
<dbReference type="PANTHER" id="PTHR46986:SF1">
    <property type="entry name" value="ENDORIBONUCLEASE YBEY, CHLOROPLASTIC"/>
    <property type="match status" value="1"/>
</dbReference>
<dbReference type="Pfam" id="PF02130">
    <property type="entry name" value="YbeY"/>
    <property type="match status" value="1"/>
</dbReference>
<dbReference type="SUPFAM" id="SSF55486">
    <property type="entry name" value="Metalloproteases ('zincins'), catalytic domain"/>
    <property type="match status" value="1"/>
</dbReference>
<dbReference type="PROSITE" id="PS01306">
    <property type="entry name" value="UPF0054"/>
    <property type="match status" value="1"/>
</dbReference>
<gene>
    <name evidence="1" type="primary">ybeY</name>
    <name type="ordered locus">CKR_0826</name>
</gene>
<proteinExistence type="inferred from homology"/>
<feature type="chain" id="PRO_1000199965" description="Endoribonuclease YbeY">
    <location>
        <begin position="1"/>
        <end position="164"/>
    </location>
</feature>
<feature type="binding site" evidence="1">
    <location>
        <position position="132"/>
    </location>
    <ligand>
        <name>Zn(2+)</name>
        <dbReference type="ChEBI" id="CHEBI:29105"/>
        <note>catalytic</note>
    </ligand>
</feature>
<feature type="binding site" evidence="1">
    <location>
        <position position="136"/>
    </location>
    <ligand>
        <name>Zn(2+)</name>
        <dbReference type="ChEBI" id="CHEBI:29105"/>
        <note>catalytic</note>
    </ligand>
</feature>
<feature type="binding site" evidence="1">
    <location>
        <position position="142"/>
    </location>
    <ligand>
        <name>Zn(2+)</name>
        <dbReference type="ChEBI" id="CHEBI:29105"/>
        <note>catalytic</note>
    </ligand>
</feature>
<evidence type="ECO:0000255" key="1">
    <source>
        <dbReference type="HAMAP-Rule" id="MF_00009"/>
    </source>
</evidence>
<reference key="1">
    <citation type="submission" date="2005-09" db="EMBL/GenBank/DDBJ databases">
        <title>Complete genome sequence of Clostridium kluyveri and comparative genomics of Clostridia species.</title>
        <authorList>
            <person name="Inui M."/>
            <person name="Nonaka H."/>
            <person name="Shinoda Y."/>
            <person name="Ikenaga Y."/>
            <person name="Abe M."/>
            <person name="Naito K."/>
            <person name="Vertes A.A."/>
            <person name="Yukawa H."/>
        </authorList>
    </citation>
    <scope>NUCLEOTIDE SEQUENCE [LARGE SCALE GENOMIC DNA]</scope>
    <source>
        <strain>NBRC 12016</strain>
    </source>
</reference>
<comment type="function">
    <text evidence="1">Single strand-specific metallo-endoribonuclease involved in late-stage 70S ribosome quality control and in maturation of the 3' terminus of the 16S rRNA.</text>
</comment>
<comment type="cofactor">
    <cofactor evidence="1">
        <name>Zn(2+)</name>
        <dbReference type="ChEBI" id="CHEBI:29105"/>
    </cofactor>
    <text evidence="1">Binds 1 zinc ion.</text>
</comment>
<comment type="subcellular location">
    <subcellularLocation>
        <location evidence="1">Cytoplasm</location>
    </subcellularLocation>
</comment>
<comment type="similarity">
    <text evidence="1">Belongs to the endoribonuclease YbeY family.</text>
</comment>
<keyword id="KW-0963">Cytoplasm</keyword>
<keyword id="KW-0255">Endonuclease</keyword>
<keyword id="KW-0378">Hydrolase</keyword>
<keyword id="KW-0479">Metal-binding</keyword>
<keyword id="KW-0540">Nuclease</keyword>
<keyword id="KW-0690">Ribosome biogenesis</keyword>
<keyword id="KW-0698">rRNA processing</keyword>
<keyword id="KW-0862">Zinc</keyword>
<sequence length="164" mass="19425">MIFLDNRQDKIEVTDKLEKIVTSSIECALKEEKVNFPCEISVVFVDNENIKDINRENRNIDRVTDVLSFPMLEYPESKVFKEVYLNYKFPEYDMNDGNLVLGDIVVSLEKCEEQSREFGHSFFRETCYLIVHSVLHLLGYDHTEDSDKKIMREREEYILKKAKL</sequence>
<accession>B9E052</accession>
<protein>
    <recommendedName>
        <fullName evidence="1">Endoribonuclease YbeY</fullName>
        <ecNumber evidence="1">3.1.-.-</ecNumber>
    </recommendedName>
</protein>